<keyword id="KW-0274">FAD</keyword>
<keyword id="KW-0285">Flavoprotein</keyword>
<keyword id="KW-0472">Membrane</keyword>
<keyword id="KW-0496">Mitochondrion</keyword>
<keyword id="KW-0503">Monooxygenase</keyword>
<keyword id="KW-0521">NADP</keyword>
<keyword id="KW-0560">Oxidoreductase</keyword>
<keyword id="KW-0662">Pyridine nucleotide biosynthesis</keyword>
<keyword id="KW-1185">Reference proteome</keyword>
<keyword id="KW-0812">Transmembrane</keyword>
<keyword id="KW-1133">Transmembrane helix</keyword>
<dbReference type="EC" id="1.14.13.9" evidence="1"/>
<dbReference type="EMBL" id="Z75955">
    <property type="protein sequence ID" value="CAB00114.1"/>
    <property type="molecule type" value="Genomic_DNA"/>
</dbReference>
<dbReference type="PIR" id="T24012">
    <property type="entry name" value="T24012"/>
</dbReference>
<dbReference type="RefSeq" id="NP_506025.1">
    <property type="nucleotide sequence ID" value="NM_073624.7"/>
</dbReference>
<dbReference type="SMR" id="Q21795"/>
<dbReference type="BioGRID" id="44680">
    <property type="interactions" value="2"/>
</dbReference>
<dbReference type="FunCoup" id="Q21795">
    <property type="interactions" value="380"/>
</dbReference>
<dbReference type="STRING" id="6239.R07B7.5.1"/>
<dbReference type="PaxDb" id="6239-R07B7.5"/>
<dbReference type="PeptideAtlas" id="Q21795"/>
<dbReference type="EnsemblMetazoa" id="R07B7.5.1">
    <property type="protein sequence ID" value="R07B7.5.1"/>
    <property type="gene ID" value="WBGene00011089"/>
</dbReference>
<dbReference type="GeneID" id="179657"/>
<dbReference type="KEGG" id="cel:CELE_R07B7.5"/>
<dbReference type="UCSC" id="R07B7.5">
    <property type="organism name" value="c. elegans"/>
</dbReference>
<dbReference type="AGR" id="WB:WBGene00011089"/>
<dbReference type="CTD" id="179657"/>
<dbReference type="WormBase" id="R07B7.5">
    <property type="protein sequence ID" value="CE06267"/>
    <property type="gene ID" value="WBGene00011089"/>
    <property type="gene designation" value="kmo-1"/>
</dbReference>
<dbReference type="eggNOG" id="KOG2614">
    <property type="taxonomic scope" value="Eukaryota"/>
</dbReference>
<dbReference type="GeneTree" id="ENSGT00390000000747"/>
<dbReference type="HOGENOM" id="CLU_023210_0_1_1"/>
<dbReference type="InParanoid" id="Q21795"/>
<dbReference type="OMA" id="REFMFIA"/>
<dbReference type="OrthoDB" id="10053569at2759"/>
<dbReference type="PhylomeDB" id="Q21795"/>
<dbReference type="Reactome" id="R-CEL-71240">
    <property type="pathway name" value="Tryptophan catabolism"/>
</dbReference>
<dbReference type="UniPathway" id="UPA00253">
    <property type="reaction ID" value="UER00328"/>
</dbReference>
<dbReference type="PRO" id="PR:Q21795"/>
<dbReference type="Proteomes" id="UP000001940">
    <property type="component" value="Chromosome V"/>
</dbReference>
<dbReference type="Bgee" id="WBGene00011089">
    <property type="expression patterns" value="Expressed in larva and 3 other cell types or tissues"/>
</dbReference>
<dbReference type="GO" id="GO:0005741">
    <property type="term" value="C:mitochondrial outer membrane"/>
    <property type="evidence" value="ECO:0000250"/>
    <property type="project" value="UniProtKB"/>
</dbReference>
<dbReference type="GO" id="GO:0071949">
    <property type="term" value="F:FAD binding"/>
    <property type="evidence" value="ECO:0007669"/>
    <property type="project" value="InterPro"/>
</dbReference>
<dbReference type="GO" id="GO:0004502">
    <property type="term" value="F:kynurenine 3-monooxygenase activity"/>
    <property type="evidence" value="ECO:0000250"/>
    <property type="project" value="UniProtKB"/>
</dbReference>
<dbReference type="GO" id="GO:0034354">
    <property type="term" value="P:'de novo' NAD biosynthetic process from L-tryptophan"/>
    <property type="evidence" value="ECO:0007669"/>
    <property type="project" value="UniProtKB-UniRule"/>
</dbReference>
<dbReference type="GO" id="GO:0043420">
    <property type="term" value="P:anthranilate metabolic process"/>
    <property type="evidence" value="ECO:0007669"/>
    <property type="project" value="UniProtKB-UniRule"/>
</dbReference>
<dbReference type="GO" id="GO:0070189">
    <property type="term" value="P:kynurenine metabolic process"/>
    <property type="evidence" value="ECO:0000318"/>
    <property type="project" value="GO_Central"/>
</dbReference>
<dbReference type="GO" id="GO:0006569">
    <property type="term" value="P:L-tryptophan catabolic process"/>
    <property type="evidence" value="ECO:0007669"/>
    <property type="project" value="UniProtKB-UniRule"/>
</dbReference>
<dbReference type="GO" id="GO:0019674">
    <property type="term" value="P:NAD metabolic process"/>
    <property type="evidence" value="ECO:0000250"/>
    <property type="project" value="UniProtKB"/>
</dbReference>
<dbReference type="GO" id="GO:0019805">
    <property type="term" value="P:quinolinate biosynthetic process"/>
    <property type="evidence" value="ECO:0007669"/>
    <property type="project" value="UniProtKB-UniRule"/>
</dbReference>
<dbReference type="FunFam" id="3.50.50.60:FF:000129">
    <property type="entry name" value="Kynurenine 3-monooxygenase"/>
    <property type="match status" value="1"/>
</dbReference>
<dbReference type="Gene3D" id="3.50.50.60">
    <property type="entry name" value="FAD/NAD(P)-binding domain"/>
    <property type="match status" value="1"/>
</dbReference>
<dbReference type="HAMAP" id="MF_01971">
    <property type="entry name" value="Kynurenine_monooxygenase"/>
    <property type="match status" value="1"/>
</dbReference>
<dbReference type="InterPro" id="IPR002938">
    <property type="entry name" value="FAD-bd"/>
</dbReference>
<dbReference type="InterPro" id="IPR036188">
    <property type="entry name" value="FAD/NAD-bd_sf"/>
</dbReference>
<dbReference type="InterPro" id="IPR027545">
    <property type="entry name" value="Kynurenine_monooxygenase"/>
</dbReference>
<dbReference type="PANTHER" id="PTHR46028">
    <property type="entry name" value="KYNURENINE 3-MONOOXYGENASE"/>
    <property type="match status" value="1"/>
</dbReference>
<dbReference type="PANTHER" id="PTHR46028:SF2">
    <property type="entry name" value="KYNURENINE 3-MONOOXYGENASE"/>
    <property type="match status" value="1"/>
</dbReference>
<dbReference type="Pfam" id="PF01494">
    <property type="entry name" value="FAD_binding_3"/>
    <property type="match status" value="1"/>
</dbReference>
<dbReference type="PRINTS" id="PR00420">
    <property type="entry name" value="RNGMNOXGNASE"/>
</dbReference>
<dbReference type="SUPFAM" id="SSF51905">
    <property type="entry name" value="FAD/NAD(P)-binding domain"/>
    <property type="match status" value="1"/>
</dbReference>
<feature type="chain" id="PRO_0000361911" description="Kynurenine 3-monooxygenase">
    <location>
        <begin position="1"/>
        <end position="461"/>
    </location>
</feature>
<feature type="transmembrane region" description="Helical" evidence="1">
    <location>
        <begin position="395"/>
        <end position="415"/>
    </location>
</feature>
<feature type="transmembrane region" description="Helical" evidence="1">
    <location>
        <begin position="432"/>
        <end position="452"/>
    </location>
</feature>
<proteinExistence type="inferred from homology"/>
<organism>
    <name type="scientific">Caenorhabditis elegans</name>
    <dbReference type="NCBI Taxonomy" id="6239"/>
    <lineage>
        <taxon>Eukaryota</taxon>
        <taxon>Metazoa</taxon>
        <taxon>Ecdysozoa</taxon>
        <taxon>Nematoda</taxon>
        <taxon>Chromadorea</taxon>
        <taxon>Rhabditida</taxon>
        <taxon>Rhabditina</taxon>
        <taxon>Rhabditomorpha</taxon>
        <taxon>Rhabditoidea</taxon>
        <taxon>Rhabditidae</taxon>
        <taxon>Peloderinae</taxon>
        <taxon>Caenorhabditis</taxon>
    </lineage>
</organism>
<reference key="1">
    <citation type="journal article" date="1998" name="Science">
        <title>Genome sequence of the nematode C. elegans: a platform for investigating biology.</title>
        <authorList>
            <consortium name="The C. elegans sequencing consortium"/>
        </authorList>
    </citation>
    <scope>NUCLEOTIDE SEQUENCE [LARGE SCALE GENOMIC DNA]</scope>
    <source>
        <strain>Bristol N2</strain>
    </source>
</reference>
<gene>
    <name evidence="1" type="primary">kmo-1</name>
    <name type="ORF">R07B7.5</name>
</gene>
<sequence length="461" mass="52312">MPSVAIAGAGLVGALNACFFAQKGWDVSVYEFRKDIRTMKHVQGRSINLALSQRGKSALEAVGLKEYIVNQGVPLYARLIHNKDGKTYSRQPYGKPGEHIVSINRRHLNEVMITQAEKSPNVKFFFEHKVKNVDYDKKQLVVQCTSQPSKIPTFGNKSPPQEHAEFHVEADLILACDGAYSAVRRSLMTIPRFDFSQEYIEHGYVELNIMANNNEFAFEENVFHLWPRGHFTLIALANRDKTFTVTIFAPFSEFEKHMSTSEDVLSFFEENFPDAFLLLGKEHIADTFNRVKPQPLVSIKCSPHSFFDNLVLMGDAAHAMVPFYGQGMNCGFEDCLVFSETLEEYGNDIAKAVKVYSDGRVNDAHSINDLAMYNYEELKDLVNKSSYKLRKKFDTIMNSIFPKSWIPLYSMVTFSRIPYSEVIERRKRQDKILSRIMTTTSTLALIGAAAGIYVNRGKLGL</sequence>
<comment type="function">
    <text evidence="1">Catalyzes the hydroxylation of L-kynurenine (L-Kyn) to form 3-hydroxy-L-kynurenine (L-3OHKyn). Required for synthesis of quinolinic acid.</text>
</comment>
<comment type="catalytic activity">
    <reaction evidence="1">
        <text>L-kynurenine + NADPH + O2 + H(+) = 3-hydroxy-L-kynurenine + NADP(+) + H2O</text>
        <dbReference type="Rhea" id="RHEA:20545"/>
        <dbReference type="ChEBI" id="CHEBI:15377"/>
        <dbReference type="ChEBI" id="CHEBI:15378"/>
        <dbReference type="ChEBI" id="CHEBI:15379"/>
        <dbReference type="ChEBI" id="CHEBI:57783"/>
        <dbReference type="ChEBI" id="CHEBI:57959"/>
        <dbReference type="ChEBI" id="CHEBI:58125"/>
        <dbReference type="ChEBI" id="CHEBI:58349"/>
        <dbReference type="EC" id="1.14.13.9"/>
    </reaction>
</comment>
<comment type="cofactor">
    <cofactor evidence="1">
        <name>FAD</name>
        <dbReference type="ChEBI" id="CHEBI:57692"/>
    </cofactor>
</comment>
<comment type="pathway">
    <text evidence="1">Cofactor biosynthesis; NAD(+) biosynthesis; quinolinate from L-kynurenine: step 1/3.</text>
</comment>
<comment type="subcellular location">
    <subcellularLocation>
        <location evidence="1">Mitochondrion</location>
    </subcellularLocation>
    <subcellularLocation>
        <location evidence="1">Membrane</location>
        <topology evidence="1">Multi-pass membrane protein</topology>
    </subcellularLocation>
</comment>
<comment type="similarity">
    <text evidence="1">Belongs to the aromatic-ring hydroxylase family. KMO subfamily.</text>
</comment>
<protein>
    <recommendedName>
        <fullName evidence="1">Kynurenine 3-monooxygenase</fullName>
        <ecNumber evidence="1">1.14.13.9</ecNumber>
    </recommendedName>
    <alternativeName>
        <fullName evidence="1">Kynurenine 3-hydroxylase</fullName>
    </alternativeName>
</protein>
<accession>Q21795</accession>
<evidence type="ECO:0000255" key="1">
    <source>
        <dbReference type="HAMAP-Rule" id="MF_03018"/>
    </source>
</evidence>
<name>KMO_CAEEL</name>